<reference key="1">
    <citation type="journal article" date="1997" name="Nature">
        <title>The complete genome sequence of the Gram-positive bacterium Bacillus subtilis.</title>
        <authorList>
            <person name="Kunst F."/>
            <person name="Ogasawara N."/>
            <person name="Moszer I."/>
            <person name="Albertini A.M."/>
            <person name="Alloni G."/>
            <person name="Azevedo V."/>
            <person name="Bertero M.G."/>
            <person name="Bessieres P."/>
            <person name="Bolotin A."/>
            <person name="Borchert S."/>
            <person name="Borriss R."/>
            <person name="Boursier L."/>
            <person name="Brans A."/>
            <person name="Braun M."/>
            <person name="Brignell S.C."/>
            <person name="Bron S."/>
            <person name="Brouillet S."/>
            <person name="Bruschi C.V."/>
            <person name="Caldwell B."/>
            <person name="Capuano V."/>
            <person name="Carter N.M."/>
            <person name="Choi S.-K."/>
            <person name="Codani J.-J."/>
            <person name="Connerton I.F."/>
            <person name="Cummings N.J."/>
            <person name="Daniel R.A."/>
            <person name="Denizot F."/>
            <person name="Devine K.M."/>
            <person name="Duesterhoeft A."/>
            <person name="Ehrlich S.D."/>
            <person name="Emmerson P.T."/>
            <person name="Entian K.-D."/>
            <person name="Errington J."/>
            <person name="Fabret C."/>
            <person name="Ferrari E."/>
            <person name="Foulger D."/>
            <person name="Fritz C."/>
            <person name="Fujita M."/>
            <person name="Fujita Y."/>
            <person name="Fuma S."/>
            <person name="Galizzi A."/>
            <person name="Galleron N."/>
            <person name="Ghim S.-Y."/>
            <person name="Glaser P."/>
            <person name="Goffeau A."/>
            <person name="Golightly E.J."/>
            <person name="Grandi G."/>
            <person name="Guiseppi G."/>
            <person name="Guy B.J."/>
            <person name="Haga K."/>
            <person name="Haiech J."/>
            <person name="Harwood C.R."/>
            <person name="Henaut A."/>
            <person name="Hilbert H."/>
            <person name="Holsappel S."/>
            <person name="Hosono S."/>
            <person name="Hullo M.-F."/>
            <person name="Itaya M."/>
            <person name="Jones L.-M."/>
            <person name="Joris B."/>
            <person name="Karamata D."/>
            <person name="Kasahara Y."/>
            <person name="Klaerr-Blanchard M."/>
            <person name="Klein C."/>
            <person name="Kobayashi Y."/>
            <person name="Koetter P."/>
            <person name="Koningstein G."/>
            <person name="Krogh S."/>
            <person name="Kumano M."/>
            <person name="Kurita K."/>
            <person name="Lapidus A."/>
            <person name="Lardinois S."/>
            <person name="Lauber J."/>
            <person name="Lazarevic V."/>
            <person name="Lee S.-M."/>
            <person name="Levine A."/>
            <person name="Liu H."/>
            <person name="Masuda S."/>
            <person name="Mauel C."/>
            <person name="Medigue C."/>
            <person name="Medina N."/>
            <person name="Mellado R.P."/>
            <person name="Mizuno M."/>
            <person name="Moestl D."/>
            <person name="Nakai S."/>
            <person name="Noback M."/>
            <person name="Noone D."/>
            <person name="O'Reilly M."/>
            <person name="Ogawa K."/>
            <person name="Ogiwara A."/>
            <person name="Oudega B."/>
            <person name="Park S.-H."/>
            <person name="Parro V."/>
            <person name="Pohl T.M."/>
            <person name="Portetelle D."/>
            <person name="Porwollik S."/>
            <person name="Prescott A.M."/>
            <person name="Presecan E."/>
            <person name="Pujic P."/>
            <person name="Purnelle B."/>
            <person name="Rapoport G."/>
            <person name="Rey M."/>
            <person name="Reynolds S."/>
            <person name="Rieger M."/>
            <person name="Rivolta C."/>
            <person name="Rocha E."/>
            <person name="Roche B."/>
            <person name="Rose M."/>
            <person name="Sadaie Y."/>
            <person name="Sato T."/>
            <person name="Scanlan E."/>
            <person name="Schleich S."/>
            <person name="Schroeter R."/>
            <person name="Scoffone F."/>
            <person name="Sekiguchi J."/>
            <person name="Sekowska A."/>
            <person name="Seror S.J."/>
            <person name="Serror P."/>
            <person name="Shin B.-S."/>
            <person name="Soldo B."/>
            <person name="Sorokin A."/>
            <person name="Tacconi E."/>
            <person name="Takagi T."/>
            <person name="Takahashi H."/>
            <person name="Takemaru K."/>
            <person name="Takeuchi M."/>
            <person name="Tamakoshi A."/>
            <person name="Tanaka T."/>
            <person name="Terpstra P."/>
            <person name="Tognoni A."/>
            <person name="Tosato V."/>
            <person name="Uchiyama S."/>
            <person name="Vandenbol M."/>
            <person name="Vannier F."/>
            <person name="Vassarotti A."/>
            <person name="Viari A."/>
            <person name="Wambutt R."/>
            <person name="Wedler E."/>
            <person name="Wedler H."/>
            <person name="Weitzenegger T."/>
            <person name="Winters P."/>
            <person name="Wipat A."/>
            <person name="Yamamoto H."/>
            <person name="Yamane K."/>
            <person name="Yasumoto K."/>
            <person name="Yata K."/>
            <person name="Yoshida K."/>
            <person name="Yoshikawa H.-F."/>
            <person name="Zumstein E."/>
            <person name="Yoshikawa H."/>
            <person name="Danchin A."/>
        </authorList>
    </citation>
    <scope>NUCLEOTIDE SEQUENCE [LARGE SCALE GENOMIC DNA]</scope>
    <source>
        <strain>168</strain>
    </source>
</reference>
<reference key="2">
    <citation type="journal article" date="2011" name="Nucleic Acids Res.">
        <title>A single methyltransferase YefA (RlmCD) catalyses both m5U747 and m5U1939 modifications in Bacillus subtilis 23S rRNA.</title>
        <authorList>
            <person name="Desmolaize B."/>
            <person name="Fabret C."/>
            <person name="Bregeon D."/>
            <person name="Rose S."/>
            <person name="Grosjean H."/>
            <person name="Douthwaite S."/>
        </authorList>
    </citation>
    <scope>FUNCTION</scope>
    <scope>CATALYTIC ACTIVITY</scope>
    <scope>GENE NAME</scope>
    <source>
        <strain>168</strain>
    </source>
</reference>
<dbReference type="EC" id="2.1.1.189"/>
<dbReference type="EC" id="2.1.1.190"/>
<dbReference type="EMBL" id="AL009126">
    <property type="protein sequence ID" value="CAB12493.1"/>
    <property type="molecule type" value="Genomic_DNA"/>
</dbReference>
<dbReference type="PIR" id="E69793">
    <property type="entry name" value="E69793"/>
</dbReference>
<dbReference type="RefSeq" id="NP_388555.1">
    <property type="nucleotide sequence ID" value="NC_000964.3"/>
</dbReference>
<dbReference type="SMR" id="O31503"/>
<dbReference type="FunCoup" id="O31503">
    <property type="interactions" value="979"/>
</dbReference>
<dbReference type="STRING" id="224308.BSU06730"/>
<dbReference type="PaxDb" id="224308-BSU06730"/>
<dbReference type="EnsemblBacteria" id="CAB12493">
    <property type="protein sequence ID" value="CAB12493"/>
    <property type="gene ID" value="BSU_06730"/>
</dbReference>
<dbReference type="GeneID" id="936060"/>
<dbReference type="KEGG" id="bsu:BSU06730"/>
<dbReference type="PATRIC" id="fig|224308.179.peg.731"/>
<dbReference type="eggNOG" id="COG2265">
    <property type="taxonomic scope" value="Bacteria"/>
</dbReference>
<dbReference type="InParanoid" id="O31503"/>
<dbReference type="OrthoDB" id="9804590at2"/>
<dbReference type="PhylomeDB" id="O31503"/>
<dbReference type="BioCyc" id="BSUB:BSU06730-MONOMER"/>
<dbReference type="BRENDA" id="2.1.1.189">
    <property type="organism ID" value="658"/>
</dbReference>
<dbReference type="Proteomes" id="UP000001570">
    <property type="component" value="Chromosome"/>
</dbReference>
<dbReference type="GO" id="GO:0051539">
    <property type="term" value="F:4 iron, 4 sulfur cluster binding"/>
    <property type="evidence" value="ECO:0007669"/>
    <property type="project" value="UniProtKB-KW"/>
</dbReference>
<dbReference type="GO" id="GO:0046872">
    <property type="term" value="F:metal ion binding"/>
    <property type="evidence" value="ECO:0007669"/>
    <property type="project" value="UniProtKB-KW"/>
</dbReference>
<dbReference type="GO" id="GO:0070041">
    <property type="term" value="F:rRNA (uridine-C5-)-methyltransferase activity"/>
    <property type="evidence" value="ECO:0000314"/>
    <property type="project" value="UniProtKB"/>
</dbReference>
<dbReference type="GO" id="GO:0070475">
    <property type="term" value="P:rRNA base methylation"/>
    <property type="evidence" value="ECO:0000318"/>
    <property type="project" value="GO_Central"/>
</dbReference>
<dbReference type="GO" id="GO:0031167">
    <property type="term" value="P:rRNA methylation"/>
    <property type="evidence" value="ECO:0000314"/>
    <property type="project" value="UniProtKB"/>
</dbReference>
<dbReference type="CDD" id="cd02440">
    <property type="entry name" value="AdoMet_MTases"/>
    <property type="match status" value="1"/>
</dbReference>
<dbReference type="FunFam" id="3.40.50.150:FF:000009">
    <property type="entry name" value="23S rRNA (Uracil(1939)-C(5))-methyltransferase RlmD"/>
    <property type="match status" value="1"/>
</dbReference>
<dbReference type="FunFam" id="2.40.50.140:FF:000097">
    <property type="entry name" value="23S rRNA (uracil(1939)-C(5))-methyltransferase RlmD"/>
    <property type="match status" value="1"/>
</dbReference>
<dbReference type="FunFam" id="2.40.50.1070:FF:000003">
    <property type="entry name" value="23S rRNA (Uracil-5-)-methyltransferase RumA"/>
    <property type="match status" value="1"/>
</dbReference>
<dbReference type="Gene3D" id="2.40.50.1070">
    <property type="match status" value="1"/>
</dbReference>
<dbReference type="Gene3D" id="2.40.50.140">
    <property type="entry name" value="Nucleic acid-binding proteins"/>
    <property type="match status" value="1"/>
</dbReference>
<dbReference type="Gene3D" id="3.40.50.150">
    <property type="entry name" value="Vaccinia Virus protein VP39"/>
    <property type="match status" value="1"/>
</dbReference>
<dbReference type="InterPro" id="IPR030390">
    <property type="entry name" value="MeTrfase_TrmA_AS"/>
</dbReference>
<dbReference type="InterPro" id="IPR030391">
    <property type="entry name" value="MeTrfase_TrmA_CS"/>
</dbReference>
<dbReference type="InterPro" id="IPR012340">
    <property type="entry name" value="NA-bd_OB-fold"/>
</dbReference>
<dbReference type="InterPro" id="IPR029063">
    <property type="entry name" value="SAM-dependent_MTases_sf"/>
</dbReference>
<dbReference type="InterPro" id="IPR002792">
    <property type="entry name" value="TRAM_dom"/>
</dbReference>
<dbReference type="InterPro" id="IPR010280">
    <property type="entry name" value="U5_MeTrfase_fam"/>
</dbReference>
<dbReference type="NCBIfam" id="TIGR00479">
    <property type="entry name" value="rumA"/>
    <property type="match status" value="1"/>
</dbReference>
<dbReference type="PANTHER" id="PTHR11061">
    <property type="entry name" value="RNA M5U METHYLTRANSFERASE"/>
    <property type="match status" value="1"/>
</dbReference>
<dbReference type="PANTHER" id="PTHR11061:SF30">
    <property type="entry name" value="TRNA (URACIL(54)-C(5))-METHYLTRANSFERASE"/>
    <property type="match status" value="1"/>
</dbReference>
<dbReference type="Pfam" id="PF01938">
    <property type="entry name" value="TRAM"/>
    <property type="match status" value="1"/>
</dbReference>
<dbReference type="Pfam" id="PF05958">
    <property type="entry name" value="tRNA_U5-meth_tr"/>
    <property type="match status" value="1"/>
</dbReference>
<dbReference type="SUPFAM" id="SSF50249">
    <property type="entry name" value="Nucleic acid-binding proteins"/>
    <property type="match status" value="1"/>
</dbReference>
<dbReference type="SUPFAM" id="SSF53335">
    <property type="entry name" value="S-adenosyl-L-methionine-dependent methyltransferases"/>
    <property type="match status" value="1"/>
</dbReference>
<dbReference type="PROSITE" id="PS51687">
    <property type="entry name" value="SAM_MT_RNA_M5U"/>
    <property type="match status" value="1"/>
</dbReference>
<dbReference type="PROSITE" id="PS50926">
    <property type="entry name" value="TRAM"/>
    <property type="match status" value="1"/>
</dbReference>
<dbReference type="PROSITE" id="PS01230">
    <property type="entry name" value="TRMA_1"/>
    <property type="match status" value="1"/>
</dbReference>
<dbReference type="PROSITE" id="PS01231">
    <property type="entry name" value="TRMA_2"/>
    <property type="match status" value="1"/>
</dbReference>
<accession>O31503</accession>
<sequence>MKMKPPVEKNEYYDVTFEDLTHEGAGVAKVQGFPIFVPNALPEEKAQIKVTRVKKGFAFGRLIELKEESPHRTDAPCPIYKQCGGCQLQHMTYEGQLLFKQKQVKDVLERIGKLDLSKVTVHPTLGMEDPWNYRNKAQVPVGEREGGLVAGFYQQRSHDIIDMSACLIQQSKNDEAVQAVKDICANYGVKAYNEERHKGWLRHIMVRYGVVTGEMMIVFITRTSDFPHKAKIIEDITAQFPHVKSIVQNINPNKTNVIFGNETNVIWGEEYIYDLIGDVKFAISARSFYQVNPEQTKVLYDKALEYAELQGEETVIDAYCGIGTISLFLAKQAKKVYGVEIVPEAIEDAKRNAELNGNTNAEFAVGEAETVIPKWYEEGITADTLVVDPPRKGCDEALLRTIVEMKPKRVVYVSCNPGTLARDLRVLEDGGYVTREVQPVDMFPHTNHVECCVLIKLKE</sequence>
<protein>
    <recommendedName>
        <fullName>23S rRNA (uracil-C(5))-methyltransferase RlmCD</fullName>
        <ecNumber>2.1.1.189</ecNumber>
        <ecNumber>2.1.1.190</ecNumber>
    </recommendedName>
    <alternativeName>
        <fullName>23S rRNA (uracil(1939)-C(5))-methyltransferase</fullName>
    </alternativeName>
    <alternativeName>
        <fullName>23S rRNA (uracil(747)-C(5))-methyltransferase</fullName>
    </alternativeName>
</protein>
<proteinExistence type="evidence at protein level"/>
<comment type="function">
    <text evidence="4">Catalyzes the formation of 5-methyl-uridine at positions 747 (m5U747) and 1939 (m5U1939) in 23S rRNA.</text>
</comment>
<comment type="catalytic activity">
    <reaction evidence="4">
        <text>uridine(747) in 23S rRNA + S-adenosyl-L-methionine = 5-methyluridine(747) in 23S rRNA + S-adenosyl-L-homocysteine + H(+)</text>
        <dbReference type="Rhea" id="RHEA:42628"/>
        <dbReference type="Rhea" id="RHEA-COMP:10154"/>
        <dbReference type="Rhea" id="RHEA-COMP:10155"/>
        <dbReference type="ChEBI" id="CHEBI:15378"/>
        <dbReference type="ChEBI" id="CHEBI:57856"/>
        <dbReference type="ChEBI" id="CHEBI:59789"/>
        <dbReference type="ChEBI" id="CHEBI:65315"/>
        <dbReference type="ChEBI" id="CHEBI:74447"/>
        <dbReference type="EC" id="2.1.1.189"/>
    </reaction>
</comment>
<comment type="catalytic activity">
    <reaction evidence="4">
        <text>uridine(1939) in 23S rRNA + S-adenosyl-L-methionine = 5-methyluridine(1939) in 23S rRNA + S-adenosyl-L-homocysteine + H(+)</text>
        <dbReference type="Rhea" id="RHEA:42908"/>
        <dbReference type="Rhea" id="RHEA-COMP:10278"/>
        <dbReference type="Rhea" id="RHEA-COMP:10279"/>
        <dbReference type="ChEBI" id="CHEBI:15378"/>
        <dbReference type="ChEBI" id="CHEBI:57856"/>
        <dbReference type="ChEBI" id="CHEBI:59789"/>
        <dbReference type="ChEBI" id="CHEBI:65315"/>
        <dbReference type="ChEBI" id="CHEBI:74447"/>
        <dbReference type="EC" id="2.1.1.190"/>
    </reaction>
</comment>
<comment type="similarity">
    <text evidence="3">Belongs to the class I-like SAM-binding methyltransferase superfamily. RNA M5U methyltransferase family.</text>
</comment>
<gene>
    <name type="primary">rlmCD</name>
    <name type="synonym">yefA</name>
    <name type="synonym">yerS</name>
    <name type="ordered locus">BSU06730</name>
</gene>
<evidence type="ECO:0000250" key="1"/>
<evidence type="ECO:0000255" key="2">
    <source>
        <dbReference type="PROSITE-ProRule" id="PRU00208"/>
    </source>
</evidence>
<evidence type="ECO:0000255" key="3">
    <source>
        <dbReference type="PROSITE-ProRule" id="PRU01024"/>
    </source>
</evidence>
<evidence type="ECO:0000269" key="4">
    <source>
    </source>
</evidence>
<organism>
    <name type="scientific">Bacillus subtilis (strain 168)</name>
    <dbReference type="NCBI Taxonomy" id="224308"/>
    <lineage>
        <taxon>Bacteria</taxon>
        <taxon>Bacillati</taxon>
        <taxon>Bacillota</taxon>
        <taxon>Bacilli</taxon>
        <taxon>Bacillales</taxon>
        <taxon>Bacillaceae</taxon>
        <taxon>Bacillus</taxon>
    </lineage>
</organism>
<name>RLMCD_BACSU</name>
<feature type="chain" id="PRO_0000161953" description="23S rRNA (uracil-C(5))-methyltransferase RlmCD">
    <location>
        <begin position="1"/>
        <end position="459"/>
    </location>
</feature>
<feature type="domain" description="TRAM" evidence="2">
    <location>
        <begin position="6"/>
        <end position="64"/>
    </location>
</feature>
<feature type="active site" description="Nucleophile" evidence="3">
    <location>
        <position position="415"/>
    </location>
</feature>
<feature type="binding site" evidence="1">
    <location>
        <position position="77"/>
    </location>
    <ligand>
        <name>[4Fe-4S] cluster</name>
        <dbReference type="ChEBI" id="CHEBI:49883"/>
    </ligand>
</feature>
<feature type="binding site" evidence="1">
    <location>
        <position position="83"/>
    </location>
    <ligand>
        <name>[4Fe-4S] cluster</name>
        <dbReference type="ChEBI" id="CHEBI:49883"/>
    </ligand>
</feature>
<feature type="binding site" evidence="1">
    <location>
        <position position="86"/>
    </location>
    <ligand>
        <name>[4Fe-4S] cluster</name>
        <dbReference type="ChEBI" id="CHEBI:49883"/>
    </ligand>
</feature>
<feature type="binding site" evidence="1">
    <location>
        <position position="166"/>
    </location>
    <ligand>
        <name>[4Fe-4S] cluster</name>
        <dbReference type="ChEBI" id="CHEBI:49883"/>
    </ligand>
</feature>
<feature type="binding site" evidence="3">
    <location>
        <position position="290"/>
    </location>
    <ligand>
        <name>S-adenosyl-L-methionine</name>
        <dbReference type="ChEBI" id="CHEBI:59789"/>
    </ligand>
</feature>
<feature type="binding site" evidence="3">
    <location>
        <position position="319"/>
    </location>
    <ligand>
        <name>S-adenosyl-L-methionine</name>
        <dbReference type="ChEBI" id="CHEBI:59789"/>
    </ligand>
</feature>
<feature type="binding site" evidence="3">
    <location>
        <position position="340"/>
    </location>
    <ligand>
        <name>S-adenosyl-L-methionine</name>
        <dbReference type="ChEBI" id="CHEBI:59789"/>
    </ligand>
</feature>
<feature type="binding site" evidence="3">
    <location>
        <position position="388"/>
    </location>
    <ligand>
        <name>S-adenosyl-L-methionine</name>
        <dbReference type="ChEBI" id="CHEBI:59789"/>
    </ligand>
</feature>
<keyword id="KW-0004">4Fe-4S</keyword>
<keyword id="KW-0408">Iron</keyword>
<keyword id="KW-0411">Iron-sulfur</keyword>
<keyword id="KW-0479">Metal-binding</keyword>
<keyword id="KW-0489">Methyltransferase</keyword>
<keyword id="KW-1185">Reference proteome</keyword>
<keyword id="KW-0698">rRNA processing</keyword>
<keyword id="KW-0949">S-adenosyl-L-methionine</keyword>
<keyword id="KW-0808">Transferase</keyword>